<dbReference type="EC" id="2.7.4.8" evidence="1"/>
<dbReference type="EMBL" id="BX936398">
    <property type="protein sequence ID" value="CAH19277.1"/>
    <property type="molecule type" value="Genomic_DNA"/>
</dbReference>
<dbReference type="RefSeq" id="WP_002209000.1">
    <property type="nucleotide sequence ID" value="NZ_CP009712.1"/>
</dbReference>
<dbReference type="SMR" id="Q66GE5"/>
<dbReference type="GeneID" id="96663512"/>
<dbReference type="KEGG" id="ypo:BZ17_2558"/>
<dbReference type="KEGG" id="yps:YPTB0037"/>
<dbReference type="PATRIC" id="fig|273123.14.peg.2683"/>
<dbReference type="Proteomes" id="UP000001011">
    <property type="component" value="Chromosome"/>
</dbReference>
<dbReference type="GO" id="GO:0005829">
    <property type="term" value="C:cytosol"/>
    <property type="evidence" value="ECO:0007669"/>
    <property type="project" value="TreeGrafter"/>
</dbReference>
<dbReference type="GO" id="GO:0005524">
    <property type="term" value="F:ATP binding"/>
    <property type="evidence" value="ECO:0007669"/>
    <property type="project" value="UniProtKB-UniRule"/>
</dbReference>
<dbReference type="GO" id="GO:0004385">
    <property type="term" value="F:guanylate kinase activity"/>
    <property type="evidence" value="ECO:0007669"/>
    <property type="project" value="UniProtKB-UniRule"/>
</dbReference>
<dbReference type="CDD" id="cd00071">
    <property type="entry name" value="GMPK"/>
    <property type="match status" value="1"/>
</dbReference>
<dbReference type="FunFam" id="3.40.50.300:FF:000855">
    <property type="entry name" value="Guanylate kinase"/>
    <property type="match status" value="1"/>
</dbReference>
<dbReference type="FunFam" id="3.30.63.10:FF:000002">
    <property type="entry name" value="Guanylate kinase 1"/>
    <property type="match status" value="1"/>
</dbReference>
<dbReference type="Gene3D" id="3.30.63.10">
    <property type="entry name" value="Guanylate Kinase phosphate binding domain"/>
    <property type="match status" value="1"/>
</dbReference>
<dbReference type="Gene3D" id="3.40.50.300">
    <property type="entry name" value="P-loop containing nucleotide triphosphate hydrolases"/>
    <property type="match status" value="1"/>
</dbReference>
<dbReference type="HAMAP" id="MF_00328">
    <property type="entry name" value="Guanylate_kinase"/>
    <property type="match status" value="1"/>
</dbReference>
<dbReference type="InterPro" id="IPR008145">
    <property type="entry name" value="GK/Ca_channel_bsu"/>
</dbReference>
<dbReference type="InterPro" id="IPR008144">
    <property type="entry name" value="Guanylate_kin-like_dom"/>
</dbReference>
<dbReference type="InterPro" id="IPR017665">
    <property type="entry name" value="Guanylate_kinase"/>
</dbReference>
<dbReference type="InterPro" id="IPR020590">
    <property type="entry name" value="Guanylate_kinase_CS"/>
</dbReference>
<dbReference type="InterPro" id="IPR027417">
    <property type="entry name" value="P-loop_NTPase"/>
</dbReference>
<dbReference type="NCBIfam" id="TIGR03263">
    <property type="entry name" value="guanyl_kin"/>
    <property type="match status" value="1"/>
</dbReference>
<dbReference type="PANTHER" id="PTHR23117:SF13">
    <property type="entry name" value="GUANYLATE KINASE"/>
    <property type="match status" value="1"/>
</dbReference>
<dbReference type="PANTHER" id="PTHR23117">
    <property type="entry name" value="GUANYLATE KINASE-RELATED"/>
    <property type="match status" value="1"/>
</dbReference>
<dbReference type="Pfam" id="PF00625">
    <property type="entry name" value="Guanylate_kin"/>
    <property type="match status" value="1"/>
</dbReference>
<dbReference type="SMART" id="SM00072">
    <property type="entry name" value="GuKc"/>
    <property type="match status" value="1"/>
</dbReference>
<dbReference type="SUPFAM" id="SSF52540">
    <property type="entry name" value="P-loop containing nucleoside triphosphate hydrolases"/>
    <property type="match status" value="1"/>
</dbReference>
<dbReference type="PROSITE" id="PS00856">
    <property type="entry name" value="GUANYLATE_KINASE_1"/>
    <property type="match status" value="1"/>
</dbReference>
<dbReference type="PROSITE" id="PS50052">
    <property type="entry name" value="GUANYLATE_KINASE_2"/>
    <property type="match status" value="1"/>
</dbReference>
<comment type="function">
    <text evidence="1">Essential for recycling GMP and indirectly, cGMP.</text>
</comment>
<comment type="catalytic activity">
    <reaction evidence="1">
        <text>GMP + ATP = GDP + ADP</text>
        <dbReference type="Rhea" id="RHEA:20780"/>
        <dbReference type="ChEBI" id="CHEBI:30616"/>
        <dbReference type="ChEBI" id="CHEBI:58115"/>
        <dbReference type="ChEBI" id="CHEBI:58189"/>
        <dbReference type="ChEBI" id="CHEBI:456216"/>
        <dbReference type="EC" id="2.7.4.8"/>
    </reaction>
</comment>
<comment type="subcellular location">
    <subcellularLocation>
        <location evidence="1">Cytoplasm</location>
    </subcellularLocation>
</comment>
<comment type="similarity">
    <text evidence="1">Belongs to the guanylate kinase family.</text>
</comment>
<proteinExistence type="inferred from homology"/>
<name>KGUA_YERPS</name>
<accession>Q66GE5</accession>
<keyword id="KW-0067">ATP-binding</keyword>
<keyword id="KW-0963">Cytoplasm</keyword>
<keyword id="KW-0418">Kinase</keyword>
<keyword id="KW-0547">Nucleotide-binding</keyword>
<keyword id="KW-0808">Transferase</keyword>
<sequence>MVQGTLYIVSAPSGAGKSSLIQALLKTQPLYDTQVSISHTTRAKRPGENHGEHYFFVSEKEFCQMIDDDAFLEHAKVFENYYGTSRLAIEQVLATGVDVFLDIDWQGAQQIRAKMPTARSIFILPPSKTELDRRLRGRGQDSEEVIAKRMEQAVAEMAHYAEYDYLIVNDDFNLALSDLKTIIRAERLRLGRQKQRHDALISKLLAD</sequence>
<evidence type="ECO:0000255" key="1">
    <source>
        <dbReference type="HAMAP-Rule" id="MF_00328"/>
    </source>
</evidence>
<gene>
    <name evidence="1" type="primary">gmk</name>
    <name type="ordered locus">YPTB0037</name>
</gene>
<feature type="chain" id="PRO_0000170648" description="Guanylate kinase">
    <location>
        <begin position="1"/>
        <end position="207"/>
    </location>
</feature>
<feature type="domain" description="Guanylate kinase-like" evidence="1">
    <location>
        <begin position="4"/>
        <end position="184"/>
    </location>
</feature>
<feature type="binding site" evidence="1">
    <location>
        <begin position="11"/>
        <end position="18"/>
    </location>
    <ligand>
        <name>ATP</name>
        <dbReference type="ChEBI" id="CHEBI:30616"/>
    </ligand>
</feature>
<organism>
    <name type="scientific">Yersinia pseudotuberculosis serotype I (strain IP32953)</name>
    <dbReference type="NCBI Taxonomy" id="273123"/>
    <lineage>
        <taxon>Bacteria</taxon>
        <taxon>Pseudomonadati</taxon>
        <taxon>Pseudomonadota</taxon>
        <taxon>Gammaproteobacteria</taxon>
        <taxon>Enterobacterales</taxon>
        <taxon>Yersiniaceae</taxon>
        <taxon>Yersinia</taxon>
    </lineage>
</organism>
<protein>
    <recommendedName>
        <fullName evidence="1">Guanylate kinase</fullName>
        <ecNumber evidence="1">2.7.4.8</ecNumber>
    </recommendedName>
    <alternativeName>
        <fullName evidence="1">GMP kinase</fullName>
    </alternativeName>
</protein>
<reference key="1">
    <citation type="journal article" date="2004" name="Proc. Natl. Acad. Sci. U.S.A.">
        <title>Insights into the evolution of Yersinia pestis through whole-genome comparison with Yersinia pseudotuberculosis.</title>
        <authorList>
            <person name="Chain P.S.G."/>
            <person name="Carniel E."/>
            <person name="Larimer F.W."/>
            <person name="Lamerdin J."/>
            <person name="Stoutland P.O."/>
            <person name="Regala W.M."/>
            <person name="Georgescu A.M."/>
            <person name="Vergez L.M."/>
            <person name="Land M.L."/>
            <person name="Motin V.L."/>
            <person name="Brubaker R.R."/>
            <person name="Fowler J."/>
            <person name="Hinnebusch J."/>
            <person name="Marceau M."/>
            <person name="Medigue C."/>
            <person name="Simonet M."/>
            <person name="Chenal-Francisque V."/>
            <person name="Souza B."/>
            <person name="Dacheux D."/>
            <person name="Elliott J.M."/>
            <person name="Derbise A."/>
            <person name="Hauser L.J."/>
            <person name="Garcia E."/>
        </authorList>
    </citation>
    <scope>NUCLEOTIDE SEQUENCE [LARGE SCALE GENOMIC DNA]</scope>
    <source>
        <strain>IP32953</strain>
    </source>
</reference>